<name>HIS6_ACET2</name>
<feature type="chain" id="PRO_1000063050" description="Imidazole glycerol phosphate synthase subunit HisF">
    <location>
        <begin position="1"/>
        <end position="253"/>
    </location>
</feature>
<feature type="active site" evidence="1">
    <location>
        <position position="11"/>
    </location>
</feature>
<feature type="active site" evidence="1">
    <location>
        <position position="130"/>
    </location>
</feature>
<gene>
    <name evidence="1" type="primary">hisF</name>
    <name type="ordered locus">Cthe_2888</name>
</gene>
<protein>
    <recommendedName>
        <fullName evidence="1">Imidazole glycerol phosphate synthase subunit HisF</fullName>
        <ecNumber evidence="1">4.3.2.10</ecNumber>
    </recommendedName>
    <alternativeName>
        <fullName evidence="1">IGP synthase cyclase subunit</fullName>
    </alternativeName>
    <alternativeName>
        <fullName evidence="1">IGP synthase subunit HisF</fullName>
    </alternativeName>
    <alternativeName>
        <fullName evidence="1">ImGP synthase subunit HisF</fullName>
        <shortName evidence="1">IGPS subunit HisF</shortName>
    </alternativeName>
</protein>
<keyword id="KW-0028">Amino-acid biosynthesis</keyword>
<keyword id="KW-0963">Cytoplasm</keyword>
<keyword id="KW-0368">Histidine biosynthesis</keyword>
<keyword id="KW-0456">Lyase</keyword>
<keyword id="KW-1185">Reference proteome</keyword>
<evidence type="ECO:0000255" key="1">
    <source>
        <dbReference type="HAMAP-Rule" id="MF_01013"/>
    </source>
</evidence>
<organism>
    <name type="scientific">Acetivibrio thermocellus (strain ATCC 27405 / DSM 1237 / JCM 9322 / NBRC 103400 / NCIMB 10682 / NRRL B-4536 / VPI 7372)</name>
    <name type="common">Clostridium thermocellum</name>
    <dbReference type="NCBI Taxonomy" id="203119"/>
    <lineage>
        <taxon>Bacteria</taxon>
        <taxon>Bacillati</taxon>
        <taxon>Bacillota</taxon>
        <taxon>Clostridia</taxon>
        <taxon>Eubacteriales</taxon>
        <taxon>Oscillospiraceae</taxon>
        <taxon>Acetivibrio</taxon>
    </lineage>
</organism>
<accession>A3DJF7</accession>
<reference key="1">
    <citation type="submission" date="2007-02" db="EMBL/GenBank/DDBJ databases">
        <title>Complete sequence of Clostridium thermocellum ATCC 27405.</title>
        <authorList>
            <consortium name="US DOE Joint Genome Institute"/>
            <person name="Copeland A."/>
            <person name="Lucas S."/>
            <person name="Lapidus A."/>
            <person name="Barry K."/>
            <person name="Detter J.C."/>
            <person name="Glavina del Rio T."/>
            <person name="Hammon N."/>
            <person name="Israni S."/>
            <person name="Dalin E."/>
            <person name="Tice H."/>
            <person name="Pitluck S."/>
            <person name="Chertkov O."/>
            <person name="Brettin T."/>
            <person name="Bruce D."/>
            <person name="Han C."/>
            <person name="Tapia R."/>
            <person name="Gilna P."/>
            <person name="Schmutz J."/>
            <person name="Larimer F."/>
            <person name="Land M."/>
            <person name="Hauser L."/>
            <person name="Kyrpides N."/>
            <person name="Mikhailova N."/>
            <person name="Wu J.H.D."/>
            <person name="Newcomb M."/>
            <person name="Richardson P."/>
        </authorList>
    </citation>
    <scope>NUCLEOTIDE SEQUENCE [LARGE SCALE GENOMIC DNA]</scope>
    <source>
        <strain>ATCC 27405 / DSM 1237 / JCM 9322 / NBRC 103400 / NCIMB 10682 / NRRL B-4536 / VPI 7372</strain>
    </source>
</reference>
<dbReference type="EC" id="4.3.2.10" evidence="1"/>
<dbReference type="EMBL" id="CP000568">
    <property type="protein sequence ID" value="ABN54086.1"/>
    <property type="molecule type" value="Genomic_DNA"/>
</dbReference>
<dbReference type="RefSeq" id="WP_003514581.1">
    <property type="nucleotide sequence ID" value="NC_009012.1"/>
</dbReference>
<dbReference type="SMR" id="A3DJF7"/>
<dbReference type="STRING" id="203119.Cthe_2888"/>
<dbReference type="GeneID" id="35805669"/>
<dbReference type="KEGG" id="cth:Cthe_2888"/>
<dbReference type="eggNOG" id="COG0107">
    <property type="taxonomic scope" value="Bacteria"/>
</dbReference>
<dbReference type="HOGENOM" id="CLU_048577_4_0_9"/>
<dbReference type="OrthoDB" id="9781903at2"/>
<dbReference type="UniPathway" id="UPA00031">
    <property type="reaction ID" value="UER00010"/>
</dbReference>
<dbReference type="Proteomes" id="UP000002145">
    <property type="component" value="Chromosome"/>
</dbReference>
<dbReference type="GO" id="GO:0005737">
    <property type="term" value="C:cytoplasm"/>
    <property type="evidence" value="ECO:0007669"/>
    <property type="project" value="UniProtKB-SubCell"/>
</dbReference>
<dbReference type="GO" id="GO:0000107">
    <property type="term" value="F:imidazoleglycerol-phosphate synthase activity"/>
    <property type="evidence" value="ECO:0007669"/>
    <property type="project" value="UniProtKB-UniRule"/>
</dbReference>
<dbReference type="GO" id="GO:0016829">
    <property type="term" value="F:lyase activity"/>
    <property type="evidence" value="ECO:0007669"/>
    <property type="project" value="UniProtKB-KW"/>
</dbReference>
<dbReference type="GO" id="GO:0000105">
    <property type="term" value="P:L-histidine biosynthetic process"/>
    <property type="evidence" value="ECO:0007669"/>
    <property type="project" value="UniProtKB-UniRule"/>
</dbReference>
<dbReference type="CDD" id="cd04731">
    <property type="entry name" value="HisF"/>
    <property type="match status" value="1"/>
</dbReference>
<dbReference type="FunFam" id="3.20.20.70:FF:000006">
    <property type="entry name" value="Imidazole glycerol phosphate synthase subunit HisF"/>
    <property type="match status" value="1"/>
</dbReference>
<dbReference type="Gene3D" id="3.20.20.70">
    <property type="entry name" value="Aldolase class I"/>
    <property type="match status" value="1"/>
</dbReference>
<dbReference type="HAMAP" id="MF_01013">
    <property type="entry name" value="HisF"/>
    <property type="match status" value="1"/>
</dbReference>
<dbReference type="InterPro" id="IPR013785">
    <property type="entry name" value="Aldolase_TIM"/>
</dbReference>
<dbReference type="InterPro" id="IPR006062">
    <property type="entry name" value="His_biosynth"/>
</dbReference>
<dbReference type="InterPro" id="IPR004651">
    <property type="entry name" value="HisF"/>
</dbReference>
<dbReference type="InterPro" id="IPR050064">
    <property type="entry name" value="IGPS_HisA/HisF"/>
</dbReference>
<dbReference type="InterPro" id="IPR011060">
    <property type="entry name" value="RibuloseP-bd_barrel"/>
</dbReference>
<dbReference type="NCBIfam" id="TIGR00735">
    <property type="entry name" value="hisF"/>
    <property type="match status" value="1"/>
</dbReference>
<dbReference type="PANTHER" id="PTHR21235:SF2">
    <property type="entry name" value="IMIDAZOLE GLYCEROL PHOSPHATE SYNTHASE HISHF"/>
    <property type="match status" value="1"/>
</dbReference>
<dbReference type="PANTHER" id="PTHR21235">
    <property type="entry name" value="IMIDAZOLE GLYCEROL PHOSPHATE SYNTHASE SUBUNIT HISF/H IGP SYNTHASE SUBUNIT HISF/H"/>
    <property type="match status" value="1"/>
</dbReference>
<dbReference type="Pfam" id="PF00977">
    <property type="entry name" value="His_biosynth"/>
    <property type="match status" value="1"/>
</dbReference>
<dbReference type="SUPFAM" id="SSF51366">
    <property type="entry name" value="Ribulose-phoshate binding barrel"/>
    <property type="match status" value="1"/>
</dbReference>
<sequence>MVTKRIIPCLDVHNGRVVKGVNFVNIRDAGDPVEIASYYDKAGADELTFLDITASAEARNIMIDVVRRVAEQVFIPFTVGGGIRTVEDFREILKAGADKVSINSAAVKRPELISEAASRFGSQCVVVAIDAKRRDDNSGWDVYINGGRINTGKDAVEWAVEVEKLGAGEILLTSMDCDGTKKGYDIELTRKVSESVRIPVIASGGAGTMEHFREALVEGKADAVLAASLFHYREIEIMELKKYLKENGIEIRM</sequence>
<comment type="function">
    <text evidence="1">IGPS catalyzes the conversion of PRFAR and glutamine to IGP, AICAR and glutamate. The HisF subunit catalyzes the cyclization activity that produces IGP and AICAR from PRFAR using the ammonia provided by the HisH subunit.</text>
</comment>
<comment type="catalytic activity">
    <reaction evidence="1">
        <text>5-[(5-phospho-1-deoxy-D-ribulos-1-ylimino)methylamino]-1-(5-phospho-beta-D-ribosyl)imidazole-4-carboxamide + L-glutamine = D-erythro-1-(imidazol-4-yl)glycerol 3-phosphate + 5-amino-1-(5-phospho-beta-D-ribosyl)imidazole-4-carboxamide + L-glutamate + H(+)</text>
        <dbReference type="Rhea" id="RHEA:24793"/>
        <dbReference type="ChEBI" id="CHEBI:15378"/>
        <dbReference type="ChEBI" id="CHEBI:29985"/>
        <dbReference type="ChEBI" id="CHEBI:58278"/>
        <dbReference type="ChEBI" id="CHEBI:58359"/>
        <dbReference type="ChEBI" id="CHEBI:58475"/>
        <dbReference type="ChEBI" id="CHEBI:58525"/>
        <dbReference type="EC" id="4.3.2.10"/>
    </reaction>
</comment>
<comment type="pathway">
    <text evidence="1">Amino-acid biosynthesis; L-histidine biosynthesis; L-histidine from 5-phospho-alpha-D-ribose 1-diphosphate: step 5/9.</text>
</comment>
<comment type="subunit">
    <text evidence="1">Heterodimer of HisH and HisF.</text>
</comment>
<comment type="subcellular location">
    <subcellularLocation>
        <location evidence="1">Cytoplasm</location>
    </subcellularLocation>
</comment>
<comment type="similarity">
    <text evidence="1">Belongs to the HisA/HisF family.</text>
</comment>
<proteinExistence type="inferred from homology"/>